<gene>
    <name type="primary">PP16-1</name>
</gene>
<comment type="function">
    <text evidence="2">Binds to both sense and antisense RNA. Interacts with mesophyll plasmodesmata to mediate its own cell-to-cell transport and potentiate RNA trafficking.</text>
</comment>
<comment type="cofactor">
    <cofactor evidence="1">
        <name>Ca(2+)</name>
        <dbReference type="ChEBI" id="CHEBI:29108"/>
    </cofactor>
</comment>
<comment type="tissue specificity">
    <text evidence="2">Sieve elements of leaves, stems, roots and flowers.</text>
</comment>
<name>PP16A_CUCMA</name>
<dbReference type="EMBL" id="AF079170">
    <property type="protein sequence ID" value="AAD05496.1"/>
    <property type="molecule type" value="mRNA"/>
</dbReference>
<dbReference type="PIR" id="T50648">
    <property type="entry name" value="T50648"/>
</dbReference>
<dbReference type="SMR" id="Q9ZT47"/>
<dbReference type="Proteomes" id="UP000504608">
    <property type="component" value="Unplaced"/>
</dbReference>
<dbReference type="GO" id="GO:0046872">
    <property type="term" value="F:metal ion binding"/>
    <property type="evidence" value="ECO:0007669"/>
    <property type="project" value="UniProtKB-KW"/>
</dbReference>
<dbReference type="GO" id="GO:0003723">
    <property type="term" value="F:RNA binding"/>
    <property type="evidence" value="ECO:0007669"/>
    <property type="project" value="UniProtKB-KW"/>
</dbReference>
<dbReference type="CDD" id="cd04049">
    <property type="entry name" value="C2_putative_Elicitor-responsive_gene"/>
    <property type="match status" value="1"/>
</dbReference>
<dbReference type="Gene3D" id="2.60.40.150">
    <property type="entry name" value="C2 domain"/>
    <property type="match status" value="1"/>
</dbReference>
<dbReference type="InterPro" id="IPR000008">
    <property type="entry name" value="C2_dom"/>
</dbReference>
<dbReference type="InterPro" id="IPR035892">
    <property type="entry name" value="C2_domain_sf"/>
</dbReference>
<dbReference type="PANTHER" id="PTHR46502:SF15">
    <property type="entry name" value="16 KDA PHLOEM PROTEIN 1"/>
    <property type="match status" value="1"/>
</dbReference>
<dbReference type="PANTHER" id="PTHR46502">
    <property type="entry name" value="C2 DOMAIN-CONTAINING"/>
    <property type="match status" value="1"/>
</dbReference>
<dbReference type="Pfam" id="PF00168">
    <property type="entry name" value="C2"/>
    <property type="match status" value="1"/>
</dbReference>
<dbReference type="SMART" id="SM00239">
    <property type="entry name" value="C2"/>
    <property type="match status" value="1"/>
</dbReference>
<dbReference type="SUPFAM" id="SSF49562">
    <property type="entry name" value="C2 domain (Calcium/lipid-binding domain, CaLB)"/>
    <property type="match status" value="1"/>
</dbReference>
<dbReference type="PROSITE" id="PS50004">
    <property type="entry name" value="C2"/>
    <property type="match status" value="1"/>
</dbReference>
<feature type="initiator methionine" description="Removed" evidence="2">
    <location>
        <position position="1"/>
    </location>
</feature>
<feature type="chain" id="PRO_0000058529" description="16 kDa phloem protein 1">
    <location>
        <begin position="2"/>
        <end position="150"/>
    </location>
</feature>
<feature type="domain" description="C2" evidence="1">
    <location>
        <begin position="1"/>
        <end position="108"/>
    </location>
</feature>
<feature type="binding site" evidence="1">
    <location>
        <position position="20"/>
    </location>
    <ligand>
        <name>Ca(2+)</name>
        <dbReference type="ChEBI" id="CHEBI:29108"/>
        <label>1</label>
    </ligand>
</feature>
<feature type="binding site" evidence="1">
    <location>
        <position position="20"/>
    </location>
    <ligand>
        <name>Ca(2+)</name>
        <dbReference type="ChEBI" id="CHEBI:29108"/>
        <label>2</label>
    </ligand>
</feature>
<feature type="binding site" evidence="1">
    <location>
        <position position="27"/>
    </location>
    <ligand>
        <name>Ca(2+)</name>
        <dbReference type="ChEBI" id="CHEBI:29108"/>
        <label>1</label>
    </ligand>
</feature>
<feature type="binding site" evidence="1">
    <location>
        <position position="78"/>
    </location>
    <ligand>
        <name>Ca(2+)</name>
        <dbReference type="ChEBI" id="CHEBI:29108"/>
        <label>1</label>
    </ligand>
</feature>
<feature type="binding site" evidence="1">
    <location>
        <position position="78"/>
    </location>
    <ligand>
        <name>Ca(2+)</name>
        <dbReference type="ChEBI" id="CHEBI:29108"/>
        <label>2</label>
    </ligand>
</feature>
<feature type="binding site" evidence="1">
    <location>
        <position position="80"/>
    </location>
    <ligand>
        <name>Ca(2+)</name>
        <dbReference type="ChEBI" id="CHEBI:29108"/>
        <label>1</label>
    </ligand>
</feature>
<feature type="binding site" evidence="1">
    <location>
        <position position="80"/>
    </location>
    <ligand>
        <name>Ca(2+)</name>
        <dbReference type="ChEBI" id="CHEBI:29108"/>
        <label>2</label>
    </ligand>
</feature>
<feature type="binding site" evidence="1">
    <location>
        <position position="86"/>
    </location>
    <ligand>
        <name>Ca(2+)</name>
        <dbReference type="ChEBI" id="CHEBI:29108"/>
        <label>2</label>
    </ligand>
</feature>
<evidence type="ECO:0000255" key="1">
    <source>
        <dbReference type="PROSITE-ProRule" id="PRU00041"/>
    </source>
</evidence>
<evidence type="ECO:0000269" key="2">
    <source>
    </source>
</evidence>
<keyword id="KW-0106">Calcium</keyword>
<keyword id="KW-0903">Direct protein sequencing</keyword>
<keyword id="KW-0479">Metal-binding</keyword>
<keyword id="KW-1185">Reference proteome</keyword>
<keyword id="KW-0694">RNA-binding</keyword>
<keyword id="KW-0813">Transport</keyword>
<protein>
    <recommendedName>
        <fullName>16 kDa phloem protein 1</fullName>
    </recommendedName>
</protein>
<proteinExistence type="evidence at protein level"/>
<sequence length="150" mass="16588">MGMGMMEVHLISGKGLQAHDPLNKPIDPYAEINFKGQERMSKVAKNAGPNPLWDEKFKFLAEYPGSGGDFHILFKVMDHDAIDGDDYIGDVKIDVKNLLAEGVRKGKSEMPPRMYHVLAHKIHFKGEIEVGVSFKLQGGGGCGGCYPWEN</sequence>
<organism>
    <name type="scientific">Cucurbita maxima</name>
    <name type="common">Pumpkin</name>
    <name type="synonym">Winter squash</name>
    <dbReference type="NCBI Taxonomy" id="3661"/>
    <lineage>
        <taxon>Eukaryota</taxon>
        <taxon>Viridiplantae</taxon>
        <taxon>Streptophyta</taxon>
        <taxon>Embryophyta</taxon>
        <taxon>Tracheophyta</taxon>
        <taxon>Spermatophyta</taxon>
        <taxon>Magnoliopsida</taxon>
        <taxon>eudicotyledons</taxon>
        <taxon>Gunneridae</taxon>
        <taxon>Pentapetalae</taxon>
        <taxon>rosids</taxon>
        <taxon>fabids</taxon>
        <taxon>Cucurbitales</taxon>
        <taxon>Cucurbitaceae</taxon>
        <taxon>Cucurbiteae</taxon>
        <taxon>Cucurbita</taxon>
    </lineage>
</organism>
<reference key="1">
    <citation type="journal article" date="1999" name="Science">
        <title>Plant paralog to viral movement protein that potentiates transport of mRNA into the phloem.</title>
        <authorList>
            <person name="Xoconostle-Cazares B."/>
            <person name="Xiang Y."/>
            <person name="Ruiz-Medrano R."/>
            <person name="Wang H.-L."/>
            <person name="Monzer J."/>
            <person name="Yoo B.-C."/>
            <person name="McFarland K.C."/>
            <person name="Franceschi V.R."/>
            <person name="Lucas W.J."/>
        </authorList>
    </citation>
    <scope>NUCLEOTIDE SEQUENCE [MRNA]</scope>
    <scope>PROTEIN SEQUENCE OF 2-21</scope>
    <scope>FUNCTION</scope>
    <scope>TISSUE SPECIFICITY</scope>
    <source>
        <strain>cv. Big max</strain>
        <tissue>Stem</tissue>
    </source>
</reference>
<accession>Q9ZT47</accession>